<evidence type="ECO:0000255" key="1">
    <source>
        <dbReference type="HAMAP-Rule" id="MF_00193"/>
    </source>
</evidence>
<evidence type="ECO:0000305" key="2"/>
<sequence>MKESLISFIKEKIEEYNYRGAVVGVSGGVDSAVVLSLCVQALGKDRVFALILPERDSSKDSLKDAVDFCERLGVEYRKRSITPILRKIGVYRLFPPRLFLPDSIVKRYVLNRWNTLSKDPFLDDLRNTGPEEFLKGLAYYRIKHRIRMCLLYFEAEKRGYAVVGTTNRTEYLTGLYVKWGDEAVDIEPIMHLYKTQVFELAKEMNVPEKILKKPPSPDLIPGITDEMAFNMSYLELDRILMKLEKNEDLSDEDPKKVERVKKILELSEKYRRDIPITFDRI</sequence>
<accession>Q9WZB3</accession>
<organism>
    <name type="scientific">Thermotoga maritima (strain ATCC 43589 / DSM 3109 / JCM 10099 / NBRC 100826 / MSB8)</name>
    <dbReference type="NCBI Taxonomy" id="243274"/>
    <lineage>
        <taxon>Bacteria</taxon>
        <taxon>Thermotogati</taxon>
        <taxon>Thermotogota</taxon>
        <taxon>Thermotogae</taxon>
        <taxon>Thermotogales</taxon>
        <taxon>Thermotogaceae</taxon>
        <taxon>Thermotoga</taxon>
    </lineage>
</organism>
<proteinExistence type="inferred from homology"/>
<comment type="function">
    <text evidence="1">Catalyzes the ATP-dependent amidation of deamido-NAD to form NAD. Uses ammonia as a nitrogen source.</text>
</comment>
<comment type="catalytic activity">
    <reaction evidence="1">
        <text>deamido-NAD(+) + NH4(+) + ATP = AMP + diphosphate + NAD(+) + H(+)</text>
        <dbReference type="Rhea" id="RHEA:21188"/>
        <dbReference type="ChEBI" id="CHEBI:15378"/>
        <dbReference type="ChEBI" id="CHEBI:28938"/>
        <dbReference type="ChEBI" id="CHEBI:30616"/>
        <dbReference type="ChEBI" id="CHEBI:33019"/>
        <dbReference type="ChEBI" id="CHEBI:57540"/>
        <dbReference type="ChEBI" id="CHEBI:58437"/>
        <dbReference type="ChEBI" id="CHEBI:456215"/>
        <dbReference type="EC" id="6.3.1.5"/>
    </reaction>
</comment>
<comment type="pathway">
    <text evidence="1">Cofactor biosynthesis; NAD(+) biosynthesis; NAD(+) from deamido-NAD(+) (ammonia route): step 1/1.</text>
</comment>
<comment type="subunit">
    <text evidence="1">Homodimer.</text>
</comment>
<comment type="similarity">
    <text evidence="1 2">Belongs to the NAD synthetase family.</text>
</comment>
<gene>
    <name type="primary">nadE1</name>
    <name type="ordered locus">TM_0645</name>
</gene>
<dbReference type="EC" id="6.3.1.5" evidence="1"/>
<dbReference type="EMBL" id="AE000512">
    <property type="protein sequence ID" value="AAD35729.1"/>
    <property type="molecule type" value="Genomic_DNA"/>
</dbReference>
<dbReference type="PIR" id="D72351">
    <property type="entry name" value="D72351"/>
</dbReference>
<dbReference type="RefSeq" id="NP_228454.1">
    <property type="nucleotide sequence ID" value="NC_000853.1"/>
</dbReference>
<dbReference type="RefSeq" id="WP_004081153.1">
    <property type="nucleotide sequence ID" value="NC_000853.1"/>
</dbReference>
<dbReference type="SMR" id="Q9WZB3"/>
<dbReference type="FunCoup" id="Q9WZB3">
    <property type="interactions" value="78"/>
</dbReference>
<dbReference type="STRING" id="243274.TM_0645"/>
<dbReference type="PaxDb" id="243274-THEMA_01440"/>
<dbReference type="EnsemblBacteria" id="AAD35729">
    <property type="protein sequence ID" value="AAD35729"/>
    <property type="gene ID" value="TM_0645"/>
</dbReference>
<dbReference type="KEGG" id="tma:TM0645"/>
<dbReference type="KEGG" id="tmi:THEMA_01440"/>
<dbReference type="KEGG" id="tmm:Tmari_0645"/>
<dbReference type="KEGG" id="tmw:THMA_0660"/>
<dbReference type="eggNOG" id="COG0171">
    <property type="taxonomic scope" value="Bacteria"/>
</dbReference>
<dbReference type="InParanoid" id="Q9WZB3"/>
<dbReference type="OrthoDB" id="9803818at2"/>
<dbReference type="BioCyc" id="MetaCyc:MONOMER-21963"/>
<dbReference type="UniPathway" id="UPA00253">
    <property type="reaction ID" value="UER00333"/>
</dbReference>
<dbReference type="Proteomes" id="UP000008183">
    <property type="component" value="Chromosome"/>
</dbReference>
<dbReference type="GO" id="GO:0005737">
    <property type="term" value="C:cytoplasm"/>
    <property type="evidence" value="ECO:0000318"/>
    <property type="project" value="GO_Central"/>
</dbReference>
<dbReference type="GO" id="GO:0005524">
    <property type="term" value="F:ATP binding"/>
    <property type="evidence" value="ECO:0007669"/>
    <property type="project" value="UniProtKB-UniRule"/>
</dbReference>
<dbReference type="GO" id="GO:0004359">
    <property type="term" value="F:glutaminase activity"/>
    <property type="evidence" value="ECO:0007669"/>
    <property type="project" value="InterPro"/>
</dbReference>
<dbReference type="GO" id="GO:0046872">
    <property type="term" value="F:metal ion binding"/>
    <property type="evidence" value="ECO:0007669"/>
    <property type="project" value="UniProtKB-KW"/>
</dbReference>
<dbReference type="GO" id="GO:0003952">
    <property type="term" value="F:NAD+ synthase (glutamine-hydrolyzing) activity"/>
    <property type="evidence" value="ECO:0007669"/>
    <property type="project" value="InterPro"/>
</dbReference>
<dbReference type="GO" id="GO:0008795">
    <property type="term" value="F:NAD+ synthase activity"/>
    <property type="evidence" value="ECO:0007669"/>
    <property type="project" value="UniProtKB-UniRule"/>
</dbReference>
<dbReference type="GO" id="GO:0009435">
    <property type="term" value="P:NAD biosynthetic process"/>
    <property type="evidence" value="ECO:0000318"/>
    <property type="project" value="GO_Central"/>
</dbReference>
<dbReference type="CDD" id="cd00553">
    <property type="entry name" value="NAD_synthase"/>
    <property type="match status" value="1"/>
</dbReference>
<dbReference type="Gene3D" id="3.40.50.620">
    <property type="entry name" value="HUPs"/>
    <property type="match status" value="1"/>
</dbReference>
<dbReference type="HAMAP" id="MF_00193">
    <property type="entry name" value="NadE_ammonia_dep"/>
    <property type="match status" value="1"/>
</dbReference>
<dbReference type="InterPro" id="IPR022310">
    <property type="entry name" value="NAD/GMP_synthase"/>
</dbReference>
<dbReference type="InterPro" id="IPR003694">
    <property type="entry name" value="NAD_synthase"/>
</dbReference>
<dbReference type="InterPro" id="IPR022926">
    <property type="entry name" value="NH(3)-dep_NAD(+)_synth"/>
</dbReference>
<dbReference type="InterPro" id="IPR014729">
    <property type="entry name" value="Rossmann-like_a/b/a_fold"/>
</dbReference>
<dbReference type="NCBIfam" id="TIGR00552">
    <property type="entry name" value="nadE"/>
    <property type="match status" value="2"/>
</dbReference>
<dbReference type="PANTHER" id="PTHR23090:SF9">
    <property type="entry name" value="GLUTAMINE-DEPENDENT NAD(+) SYNTHETASE"/>
    <property type="match status" value="1"/>
</dbReference>
<dbReference type="PANTHER" id="PTHR23090">
    <property type="entry name" value="NH 3 /GLUTAMINE-DEPENDENT NAD + SYNTHETASE"/>
    <property type="match status" value="1"/>
</dbReference>
<dbReference type="Pfam" id="PF02540">
    <property type="entry name" value="NAD_synthase"/>
    <property type="match status" value="2"/>
</dbReference>
<dbReference type="SUPFAM" id="SSF52402">
    <property type="entry name" value="Adenine nucleotide alpha hydrolases-like"/>
    <property type="match status" value="1"/>
</dbReference>
<feature type="chain" id="PRO_0000152212" description="NH(3)-dependent NAD(+) synthetase">
    <location>
        <begin position="1"/>
        <end position="281"/>
    </location>
</feature>
<feature type="binding site" evidence="1">
    <location>
        <begin position="24"/>
        <end position="31"/>
    </location>
    <ligand>
        <name>ATP</name>
        <dbReference type="ChEBI" id="CHEBI:30616"/>
    </ligand>
</feature>
<feature type="binding site" evidence="1">
    <location>
        <position position="30"/>
    </location>
    <ligand>
        <name>Mg(2+)</name>
        <dbReference type="ChEBI" id="CHEBI:18420"/>
    </ligand>
</feature>
<feature type="binding site" evidence="1">
    <location>
        <position position="145"/>
    </location>
    <ligand>
        <name>deamido-NAD(+)</name>
        <dbReference type="ChEBI" id="CHEBI:58437"/>
    </ligand>
</feature>
<feature type="binding site" evidence="1">
    <location>
        <position position="165"/>
    </location>
    <ligand>
        <name>ATP</name>
        <dbReference type="ChEBI" id="CHEBI:30616"/>
    </ligand>
</feature>
<feature type="binding site" evidence="1">
    <location>
        <position position="170"/>
    </location>
    <ligand>
        <name>Mg(2+)</name>
        <dbReference type="ChEBI" id="CHEBI:18420"/>
    </ligand>
</feature>
<feature type="binding site" evidence="1">
    <location>
        <position position="178"/>
    </location>
    <ligand>
        <name>deamido-NAD(+)</name>
        <dbReference type="ChEBI" id="CHEBI:58437"/>
    </ligand>
</feature>
<feature type="binding site" evidence="1">
    <location>
        <position position="185"/>
    </location>
    <ligand>
        <name>deamido-NAD(+)</name>
        <dbReference type="ChEBI" id="CHEBI:58437"/>
    </ligand>
</feature>
<feature type="binding site" evidence="1">
    <location>
        <position position="194"/>
    </location>
    <ligand>
        <name>ATP</name>
        <dbReference type="ChEBI" id="CHEBI:30616"/>
    </ligand>
</feature>
<feature type="binding site" evidence="1">
    <location>
        <position position="216"/>
    </location>
    <ligand>
        <name>ATP</name>
        <dbReference type="ChEBI" id="CHEBI:30616"/>
    </ligand>
</feature>
<keyword id="KW-0067">ATP-binding</keyword>
<keyword id="KW-0436">Ligase</keyword>
<keyword id="KW-0460">Magnesium</keyword>
<keyword id="KW-0479">Metal-binding</keyword>
<keyword id="KW-0520">NAD</keyword>
<keyword id="KW-0547">Nucleotide-binding</keyword>
<keyword id="KW-1185">Reference proteome</keyword>
<protein>
    <recommendedName>
        <fullName evidence="1">NH(3)-dependent NAD(+) synthetase</fullName>
        <ecNumber evidence="1">6.3.1.5</ecNumber>
    </recommendedName>
</protein>
<name>NADE1_THEMA</name>
<reference key="1">
    <citation type="journal article" date="1999" name="Nature">
        <title>Evidence for lateral gene transfer between Archaea and Bacteria from genome sequence of Thermotoga maritima.</title>
        <authorList>
            <person name="Nelson K.E."/>
            <person name="Clayton R.A."/>
            <person name="Gill S.R."/>
            <person name="Gwinn M.L."/>
            <person name="Dodson R.J."/>
            <person name="Haft D.H."/>
            <person name="Hickey E.K."/>
            <person name="Peterson J.D."/>
            <person name="Nelson W.C."/>
            <person name="Ketchum K.A."/>
            <person name="McDonald L.A."/>
            <person name="Utterback T.R."/>
            <person name="Malek J.A."/>
            <person name="Linher K.D."/>
            <person name="Garrett M.M."/>
            <person name="Stewart A.M."/>
            <person name="Cotton M.D."/>
            <person name="Pratt M.S."/>
            <person name="Phillips C.A."/>
            <person name="Richardson D.L."/>
            <person name="Heidelberg J.F."/>
            <person name="Sutton G.G."/>
            <person name="Fleischmann R.D."/>
            <person name="Eisen J.A."/>
            <person name="White O."/>
            <person name="Salzberg S.L."/>
            <person name="Smith H.O."/>
            <person name="Venter J.C."/>
            <person name="Fraser C.M."/>
        </authorList>
    </citation>
    <scope>NUCLEOTIDE SEQUENCE [LARGE SCALE GENOMIC DNA]</scope>
    <source>
        <strain>ATCC 43589 / DSM 3109 / JCM 10099 / NBRC 100826 / MSB8</strain>
    </source>
</reference>